<sequence>MSRRSTAEKKTAKSDPIYHNRLVNMVVNRILKNGKKSLAYRILYRAIKNIQQKTEKNPLSVLRQAIRRVTPNVTVKARRVGGSTYRVPTEIRSTQGKVLAIRWLLGASRKRLGRNMKFKLSHELMDAARGNGNAIRKKEETHRMAEANRAFAHFR</sequence>
<dbReference type="EMBL" id="AY228468">
    <property type="protein sequence ID" value="AAO74117.1"/>
    <property type="molecule type" value="Genomic_DNA"/>
</dbReference>
<dbReference type="RefSeq" id="NP_817291.1">
    <property type="nucleotide sequence ID" value="NC_004677.2"/>
</dbReference>
<dbReference type="SMR" id="Q85WV2"/>
<dbReference type="GeneID" id="806902"/>
<dbReference type="GO" id="GO:0009507">
    <property type="term" value="C:chloroplast"/>
    <property type="evidence" value="ECO:0007669"/>
    <property type="project" value="UniProtKB-SubCell"/>
</dbReference>
<dbReference type="GO" id="GO:0015935">
    <property type="term" value="C:small ribosomal subunit"/>
    <property type="evidence" value="ECO:0007669"/>
    <property type="project" value="InterPro"/>
</dbReference>
<dbReference type="GO" id="GO:0019843">
    <property type="term" value="F:rRNA binding"/>
    <property type="evidence" value="ECO:0007669"/>
    <property type="project" value="UniProtKB-UniRule"/>
</dbReference>
<dbReference type="GO" id="GO:0003735">
    <property type="term" value="F:structural constituent of ribosome"/>
    <property type="evidence" value="ECO:0007669"/>
    <property type="project" value="InterPro"/>
</dbReference>
<dbReference type="GO" id="GO:0006412">
    <property type="term" value="P:translation"/>
    <property type="evidence" value="ECO:0007669"/>
    <property type="project" value="UniProtKB-UniRule"/>
</dbReference>
<dbReference type="CDD" id="cd14871">
    <property type="entry name" value="uS7_Chloroplast"/>
    <property type="match status" value="1"/>
</dbReference>
<dbReference type="FunFam" id="1.10.455.10:FF:000001">
    <property type="entry name" value="30S ribosomal protein S7"/>
    <property type="match status" value="1"/>
</dbReference>
<dbReference type="Gene3D" id="1.10.455.10">
    <property type="entry name" value="Ribosomal protein S7 domain"/>
    <property type="match status" value="1"/>
</dbReference>
<dbReference type="HAMAP" id="MF_00480_B">
    <property type="entry name" value="Ribosomal_uS7_B"/>
    <property type="match status" value="1"/>
</dbReference>
<dbReference type="InterPro" id="IPR000235">
    <property type="entry name" value="Ribosomal_uS7"/>
</dbReference>
<dbReference type="InterPro" id="IPR005717">
    <property type="entry name" value="Ribosomal_uS7_bac/org-type"/>
</dbReference>
<dbReference type="InterPro" id="IPR020606">
    <property type="entry name" value="Ribosomal_uS7_CS"/>
</dbReference>
<dbReference type="InterPro" id="IPR023798">
    <property type="entry name" value="Ribosomal_uS7_dom"/>
</dbReference>
<dbReference type="InterPro" id="IPR036823">
    <property type="entry name" value="Ribosomal_uS7_dom_sf"/>
</dbReference>
<dbReference type="NCBIfam" id="TIGR01029">
    <property type="entry name" value="rpsG_bact"/>
    <property type="match status" value="1"/>
</dbReference>
<dbReference type="PANTHER" id="PTHR11205">
    <property type="entry name" value="RIBOSOMAL PROTEIN S7"/>
    <property type="match status" value="1"/>
</dbReference>
<dbReference type="Pfam" id="PF00177">
    <property type="entry name" value="Ribosomal_S7"/>
    <property type="match status" value="1"/>
</dbReference>
<dbReference type="PIRSF" id="PIRSF002122">
    <property type="entry name" value="RPS7p_RPS7a_RPS5e_RPS7o"/>
    <property type="match status" value="1"/>
</dbReference>
<dbReference type="SUPFAM" id="SSF47973">
    <property type="entry name" value="Ribosomal protein S7"/>
    <property type="match status" value="1"/>
</dbReference>
<dbReference type="PROSITE" id="PS00052">
    <property type="entry name" value="RIBOSOMAL_S7"/>
    <property type="match status" value="1"/>
</dbReference>
<name>RR7_PINKO</name>
<reference key="1">
    <citation type="submission" date="2003-02" db="EMBL/GenBank/DDBJ databases">
        <title>Complete nucleotide sequence of Pinus koraiensis.</title>
        <authorList>
            <person name="Noh E.W."/>
            <person name="Lee J.S."/>
            <person name="Choi Y.I."/>
            <person name="Han M.S."/>
            <person name="Yi Y.S."/>
            <person name="Han S.U."/>
        </authorList>
    </citation>
    <scope>NUCLEOTIDE SEQUENCE [LARGE SCALE GENOMIC DNA]</scope>
    <source>
        <strain>KangWon16</strain>
    </source>
</reference>
<feature type="chain" id="PRO_0000124490" description="Small ribosomal subunit protein uS7c">
    <location>
        <begin position="1"/>
        <end position="155"/>
    </location>
</feature>
<geneLocation type="chloroplast"/>
<proteinExistence type="inferred from homology"/>
<protein>
    <recommendedName>
        <fullName evidence="2">Small ribosomal subunit protein uS7c</fullName>
    </recommendedName>
    <alternativeName>
        <fullName>30S ribosomal protein S7, chloroplastic</fullName>
    </alternativeName>
</protein>
<comment type="function">
    <text evidence="1">One of the primary rRNA binding proteins, it binds directly to 16S rRNA where it nucleates assembly of the head domain of the 30S subunit.</text>
</comment>
<comment type="subunit">
    <text>Part of the 30S ribosomal subunit.</text>
</comment>
<comment type="subcellular location">
    <subcellularLocation>
        <location>Plastid</location>
        <location>Chloroplast</location>
    </subcellularLocation>
</comment>
<comment type="similarity">
    <text evidence="2">Belongs to the universal ribosomal protein uS7 family.</text>
</comment>
<accession>Q85WV2</accession>
<organism>
    <name type="scientific">Pinus koraiensis</name>
    <name type="common">Korean pine</name>
    <dbReference type="NCBI Taxonomy" id="88728"/>
    <lineage>
        <taxon>Eukaryota</taxon>
        <taxon>Viridiplantae</taxon>
        <taxon>Streptophyta</taxon>
        <taxon>Embryophyta</taxon>
        <taxon>Tracheophyta</taxon>
        <taxon>Spermatophyta</taxon>
        <taxon>Pinopsida</taxon>
        <taxon>Pinidae</taxon>
        <taxon>Conifers I</taxon>
        <taxon>Pinales</taxon>
        <taxon>Pinaceae</taxon>
        <taxon>Pinus</taxon>
        <taxon>Pinus subgen. Strobus</taxon>
    </lineage>
</organism>
<evidence type="ECO:0000250" key="1"/>
<evidence type="ECO:0000305" key="2"/>
<keyword id="KW-0150">Chloroplast</keyword>
<keyword id="KW-0934">Plastid</keyword>
<keyword id="KW-0687">Ribonucleoprotein</keyword>
<keyword id="KW-0689">Ribosomal protein</keyword>
<keyword id="KW-0694">RNA-binding</keyword>
<keyword id="KW-0699">rRNA-binding</keyword>
<gene>
    <name type="primary">rps7</name>
</gene>